<accession>A5ITG3</accession>
<feature type="chain" id="PRO_1000077023" description="Queuine tRNA-ribosyltransferase">
    <location>
        <begin position="1"/>
        <end position="379"/>
    </location>
</feature>
<feature type="region of interest" description="RNA binding" evidence="1">
    <location>
        <begin position="249"/>
        <end position="255"/>
    </location>
</feature>
<feature type="region of interest" description="RNA binding; important for wobble base 34 recognition" evidence="1">
    <location>
        <begin position="273"/>
        <end position="277"/>
    </location>
</feature>
<feature type="active site" description="Proton acceptor" evidence="1">
    <location>
        <position position="94"/>
    </location>
</feature>
<feature type="active site" description="Nucleophile" evidence="1">
    <location>
        <position position="268"/>
    </location>
</feature>
<feature type="binding site" evidence="1">
    <location>
        <begin position="94"/>
        <end position="98"/>
    </location>
    <ligand>
        <name>substrate</name>
    </ligand>
</feature>
<feature type="binding site" evidence="1">
    <location>
        <position position="148"/>
    </location>
    <ligand>
        <name>substrate</name>
    </ligand>
</feature>
<feature type="binding site" evidence="1">
    <location>
        <position position="191"/>
    </location>
    <ligand>
        <name>substrate</name>
    </ligand>
</feature>
<feature type="binding site" evidence="1">
    <location>
        <position position="218"/>
    </location>
    <ligand>
        <name>substrate</name>
    </ligand>
</feature>
<feature type="binding site" evidence="1">
    <location>
        <position position="306"/>
    </location>
    <ligand>
        <name>Zn(2+)</name>
        <dbReference type="ChEBI" id="CHEBI:29105"/>
    </ligand>
</feature>
<feature type="binding site" evidence="1">
    <location>
        <position position="308"/>
    </location>
    <ligand>
        <name>Zn(2+)</name>
        <dbReference type="ChEBI" id="CHEBI:29105"/>
    </ligand>
</feature>
<feature type="binding site" evidence="1">
    <location>
        <position position="311"/>
    </location>
    <ligand>
        <name>Zn(2+)</name>
        <dbReference type="ChEBI" id="CHEBI:29105"/>
    </ligand>
</feature>
<feature type="binding site" evidence="1">
    <location>
        <position position="337"/>
    </location>
    <ligand>
        <name>Zn(2+)</name>
        <dbReference type="ChEBI" id="CHEBI:29105"/>
    </ligand>
</feature>
<organism>
    <name type="scientific">Staphylococcus aureus (strain JH9)</name>
    <dbReference type="NCBI Taxonomy" id="359786"/>
    <lineage>
        <taxon>Bacteria</taxon>
        <taxon>Bacillati</taxon>
        <taxon>Bacillota</taxon>
        <taxon>Bacilli</taxon>
        <taxon>Bacillales</taxon>
        <taxon>Staphylococcaceae</taxon>
        <taxon>Staphylococcus</taxon>
    </lineage>
</organism>
<evidence type="ECO:0000255" key="1">
    <source>
        <dbReference type="HAMAP-Rule" id="MF_00168"/>
    </source>
</evidence>
<reference key="1">
    <citation type="submission" date="2007-05" db="EMBL/GenBank/DDBJ databases">
        <title>Complete sequence of chromosome of Staphylococcus aureus subsp. aureus JH9.</title>
        <authorList>
            <consortium name="US DOE Joint Genome Institute"/>
            <person name="Copeland A."/>
            <person name="Lucas S."/>
            <person name="Lapidus A."/>
            <person name="Barry K."/>
            <person name="Detter J.C."/>
            <person name="Glavina del Rio T."/>
            <person name="Hammon N."/>
            <person name="Israni S."/>
            <person name="Pitluck S."/>
            <person name="Chain P."/>
            <person name="Malfatti S."/>
            <person name="Shin M."/>
            <person name="Vergez L."/>
            <person name="Schmutz J."/>
            <person name="Larimer F."/>
            <person name="Land M."/>
            <person name="Hauser L."/>
            <person name="Kyrpides N."/>
            <person name="Kim E."/>
            <person name="Tomasz A."/>
            <person name="Richardson P."/>
        </authorList>
    </citation>
    <scope>NUCLEOTIDE SEQUENCE [LARGE SCALE GENOMIC DNA]</scope>
    <source>
        <strain>JH9</strain>
    </source>
</reference>
<dbReference type="EC" id="2.4.2.29" evidence="1"/>
<dbReference type="EMBL" id="CP000703">
    <property type="protein sequence ID" value="ABQ49486.1"/>
    <property type="molecule type" value="Genomic_DNA"/>
</dbReference>
<dbReference type="RefSeq" id="WP_001112045.1">
    <property type="nucleotide sequence ID" value="NC_009487.1"/>
</dbReference>
<dbReference type="SMR" id="A5ITG3"/>
<dbReference type="KEGG" id="saj:SaurJH9_1696"/>
<dbReference type="HOGENOM" id="CLU_022060_0_1_9"/>
<dbReference type="UniPathway" id="UPA00392"/>
<dbReference type="GO" id="GO:0005829">
    <property type="term" value="C:cytosol"/>
    <property type="evidence" value="ECO:0007669"/>
    <property type="project" value="TreeGrafter"/>
</dbReference>
<dbReference type="GO" id="GO:0046872">
    <property type="term" value="F:metal ion binding"/>
    <property type="evidence" value="ECO:0007669"/>
    <property type="project" value="UniProtKB-KW"/>
</dbReference>
<dbReference type="GO" id="GO:0008479">
    <property type="term" value="F:tRNA-guanosine(34) queuine transglycosylase activity"/>
    <property type="evidence" value="ECO:0007669"/>
    <property type="project" value="UniProtKB-UniRule"/>
</dbReference>
<dbReference type="GO" id="GO:0008616">
    <property type="term" value="P:queuosine biosynthetic process"/>
    <property type="evidence" value="ECO:0007669"/>
    <property type="project" value="UniProtKB-UniRule"/>
</dbReference>
<dbReference type="GO" id="GO:0002099">
    <property type="term" value="P:tRNA wobble guanine modification"/>
    <property type="evidence" value="ECO:0007669"/>
    <property type="project" value="TreeGrafter"/>
</dbReference>
<dbReference type="GO" id="GO:0101030">
    <property type="term" value="P:tRNA-guanine transglycosylation"/>
    <property type="evidence" value="ECO:0007669"/>
    <property type="project" value="InterPro"/>
</dbReference>
<dbReference type="FunFam" id="3.20.20.105:FF:000001">
    <property type="entry name" value="Queuine tRNA-ribosyltransferase"/>
    <property type="match status" value="1"/>
</dbReference>
<dbReference type="Gene3D" id="3.20.20.105">
    <property type="entry name" value="Queuine tRNA-ribosyltransferase-like"/>
    <property type="match status" value="1"/>
</dbReference>
<dbReference type="HAMAP" id="MF_00168">
    <property type="entry name" value="Q_tRNA_Tgt"/>
    <property type="match status" value="1"/>
</dbReference>
<dbReference type="InterPro" id="IPR050076">
    <property type="entry name" value="ArchSynthase1/Queuine_TRR"/>
</dbReference>
<dbReference type="InterPro" id="IPR004803">
    <property type="entry name" value="TGT"/>
</dbReference>
<dbReference type="InterPro" id="IPR036511">
    <property type="entry name" value="TGT-like_sf"/>
</dbReference>
<dbReference type="InterPro" id="IPR002616">
    <property type="entry name" value="tRNA_ribo_trans-like"/>
</dbReference>
<dbReference type="NCBIfam" id="TIGR00430">
    <property type="entry name" value="Q_tRNA_tgt"/>
    <property type="match status" value="1"/>
</dbReference>
<dbReference type="NCBIfam" id="TIGR00449">
    <property type="entry name" value="tgt_general"/>
    <property type="match status" value="1"/>
</dbReference>
<dbReference type="PANTHER" id="PTHR46499">
    <property type="entry name" value="QUEUINE TRNA-RIBOSYLTRANSFERASE"/>
    <property type="match status" value="1"/>
</dbReference>
<dbReference type="PANTHER" id="PTHR46499:SF1">
    <property type="entry name" value="QUEUINE TRNA-RIBOSYLTRANSFERASE"/>
    <property type="match status" value="1"/>
</dbReference>
<dbReference type="Pfam" id="PF01702">
    <property type="entry name" value="TGT"/>
    <property type="match status" value="1"/>
</dbReference>
<dbReference type="SUPFAM" id="SSF51713">
    <property type="entry name" value="tRNA-guanine transglycosylase"/>
    <property type="match status" value="1"/>
</dbReference>
<protein>
    <recommendedName>
        <fullName evidence="1">Queuine tRNA-ribosyltransferase</fullName>
        <ecNumber evidence="1">2.4.2.29</ecNumber>
    </recommendedName>
    <alternativeName>
        <fullName evidence="1">Guanine insertion enzyme</fullName>
    </alternativeName>
    <alternativeName>
        <fullName evidence="1">tRNA-guanine transglycosylase</fullName>
    </alternativeName>
</protein>
<comment type="function">
    <text evidence="1">Catalyzes the base-exchange of a guanine (G) residue with the queuine precursor 7-aminomethyl-7-deazaguanine (PreQ1) at position 34 (anticodon wobble position) in tRNAs with GU(N) anticodons (tRNA-Asp, -Asn, -His and -Tyr). Catalysis occurs through a double-displacement mechanism. The nucleophile active site attacks the C1' of nucleotide 34 to detach the guanine base from the RNA, forming a covalent enzyme-RNA intermediate. The proton acceptor active site deprotonates the incoming PreQ1, allowing a nucleophilic attack on the C1' of the ribose to form the product. After dissociation, two additional enzymatic reactions on the tRNA convert PreQ1 to queuine (Q), resulting in the hypermodified nucleoside queuosine (7-(((4,5-cis-dihydroxy-2-cyclopenten-1-yl)amino)methyl)-7-deazaguanosine).</text>
</comment>
<comment type="catalytic activity">
    <reaction evidence="1">
        <text>7-aminomethyl-7-carbaguanine + guanosine(34) in tRNA = 7-aminomethyl-7-carbaguanosine(34) in tRNA + guanine</text>
        <dbReference type="Rhea" id="RHEA:24104"/>
        <dbReference type="Rhea" id="RHEA-COMP:10341"/>
        <dbReference type="Rhea" id="RHEA-COMP:10342"/>
        <dbReference type="ChEBI" id="CHEBI:16235"/>
        <dbReference type="ChEBI" id="CHEBI:58703"/>
        <dbReference type="ChEBI" id="CHEBI:74269"/>
        <dbReference type="ChEBI" id="CHEBI:82833"/>
        <dbReference type="EC" id="2.4.2.29"/>
    </reaction>
</comment>
<comment type="cofactor">
    <cofactor evidence="1">
        <name>Zn(2+)</name>
        <dbReference type="ChEBI" id="CHEBI:29105"/>
    </cofactor>
    <text evidence="1">Binds 1 zinc ion per subunit.</text>
</comment>
<comment type="pathway">
    <text evidence="1">tRNA modification; tRNA-queuosine biosynthesis.</text>
</comment>
<comment type="subunit">
    <text evidence="1">Homodimer. Within each dimer, one monomer is responsible for RNA recognition and catalysis, while the other monomer binds to the replacement base PreQ1.</text>
</comment>
<comment type="similarity">
    <text evidence="1">Belongs to the queuine tRNA-ribosyltransferase family.</text>
</comment>
<proteinExistence type="inferred from homology"/>
<sequence length="379" mass="43310">MPAVTYEHIKTCKQSGARLGIVHTPHGSFETPMFMPVGTKATVKTMSPEELRQIEAKIILGNTYHLWLQPGNDIIKHAGGLHKFMNWDGPILTDSGGFQVFSLSNLRKITEEGVEFRHHTNGSKLFLSPEKSMQIQNDLGSDIMMAFDECPPMPAEYDYVKKSIERTTRWAKRCLDAHQRPEDQALFGIIQGGEYEDLREQSAKDLVELDFPGYAIGGLSVGEPKPVMYKMVEHTEQFMPKDKPRYLMGVGSPDALIECSIRGMDMFDCVLPTRIARNGTCMTSQGRLVIKNAKFADDLRPLDENCDCYTCQNYSRAYIRHLIKAEETFGIRLTTIHNLHFLLKLMEDIRQAIREDRLLDFKEEFFEQYGLNVENPKNF</sequence>
<keyword id="KW-0328">Glycosyltransferase</keyword>
<keyword id="KW-0479">Metal-binding</keyword>
<keyword id="KW-0671">Queuosine biosynthesis</keyword>
<keyword id="KW-0808">Transferase</keyword>
<keyword id="KW-0819">tRNA processing</keyword>
<keyword id="KW-0862">Zinc</keyword>
<gene>
    <name evidence="1" type="primary">tgt</name>
    <name type="ordered locus">SaurJH9_1696</name>
</gene>
<name>TGT_STAA9</name>